<accession>C3N841</accession>
<organism>
    <name type="scientific">Saccharolobus islandicus (strain Y.G.57.14 / Yellowstone #1)</name>
    <name type="common">Sulfolobus islandicus</name>
    <dbReference type="NCBI Taxonomy" id="439386"/>
    <lineage>
        <taxon>Archaea</taxon>
        <taxon>Thermoproteota</taxon>
        <taxon>Thermoprotei</taxon>
        <taxon>Sulfolobales</taxon>
        <taxon>Sulfolobaceae</taxon>
        <taxon>Saccharolobus</taxon>
    </lineage>
</organism>
<feature type="chain" id="PRO_1000204667" description="Probable porphobilinogen deaminase">
    <location>
        <begin position="1"/>
        <end position="293"/>
    </location>
</feature>
<feature type="modified residue" description="S-(dipyrrolylmethanemethyl)cysteine" evidence="1">
    <location>
        <position position="233"/>
    </location>
</feature>
<comment type="function">
    <text evidence="1">Tetrapolymerization of the monopyrrole PBG into the hydroxymethylbilane pre-uroporphyrinogen in several discrete steps.</text>
</comment>
<comment type="catalytic activity">
    <reaction evidence="1">
        <text>4 porphobilinogen + H2O = hydroxymethylbilane + 4 NH4(+)</text>
        <dbReference type="Rhea" id="RHEA:13185"/>
        <dbReference type="ChEBI" id="CHEBI:15377"/>
        <dbReference type="ChEBI" id="CHEBI:28938"/>
        <dbReference type="ChEBI" id="CHEBI:57845"/>
        <dbReference type="ChEBI" id="CHEBI:58126"/>
        <dbReference type="EC" id="2.5.1.61"/>
    </reaction>
</comment>
<comment type="cofactor">
    <cofactor evidence="1">
        <name>dipyrromethane</name>
        <dbReference type="ChEBI" id="CHEBI:60342"/>
    </cofactor>
    <text evidence="1">Binds 1 dipyrromethane group covalently.</text>
</comment>
<comment type="pathway">
    <text evidence="1">Porphyrin-containing compound metabolism; protoporphyrin-IX biosynthesis; coproporphyrinogen-III from 5-aminolevulinate: step 2/4.</text>
</comment>
<comment type="miscellaneous">
    <text evidence="1">The porphobilinogen subunits are added to the dipyrromethane group.</text>
</comment>
<comment type="similarity">
    <text evidence="1">Belongs to the HMBS family.</text>
</comment>
<reference key="1">
    <citation type="journal article" date="2009" name="Proc. Natl. Acad. Sci. U.S.A.">
        <title>Biogeography of the Sulfolobus islandicus pan-genome.</title>
        <authorList>
            <person name="Reno M.L."/>
            <person name="Held N.L."/>
            <person name="Fields C.J."/>
            <person name="Burke P.V."/>
            <person name="Whitaker R.J."/>
        </authorList>
    </citation>
    <scope>NUCLEOTIDE SEQUENCE [LARGE SCALE GENOMIC DNA]</scope>
    <source>
        <strain>Y.G.57.14 / Yellowstone #1</strain>
    </source>
</reference>
<protein>
    <recommendedName>
        <fullName evidence="1">Probable porphobilinogen deaminase</fullName>
        <shortName evidence="1">PBG</shortName>
        <ecNumber evidence="1">2.5.1.61</ecNumber>
    </recommendedName>
    <alternativeName>
        <fullName evidence="1">Hydroxymethylbilane synthase</fullName>
        <shortName evidence="1">HMBS</shortName>
    </alternativeName>
    <alternativeName>
        <fullName evidence="1">Pre-uroporphyrinogen synthase</fullName>
    </alternativeName>
</protein>
<proteinExistence type="inferred from homology"/>
<dbReference type="EC" id="2.5.1.61" evidence="1"/>
<dbReference type="EMBL" id="CP001403">
    <property type="protein sequence ID" value="ACP46328.1"/>
    <property type="molecule type" value="Genomic_DNA"/>
</dbReference>
<dbReference type="RefSeq" id="WP_012716466.1">
    <property type="nucleotide sequence ID" value="NC_012622.1"/>
</dbReference>
<dbReference type="SMR" id="C3N841"/>
<dbReference type="GeneID" id="7805632"/>
<dbReference type="KEGG" id="siy:YG5714_2074"/>
<dbReference type="HOGENOM" id="CLU_019704_1_0_2"/>
<dbReference type="UniPathway" id="UPA00251">
    <property type="reaction ID" value="UER00319"/>
</dbReference>
<dbReference type="Proteomes" id="UP000002308">
    <property type="component" value="Chromosome"/>
</dbReference>
<dbReference type="GO" id="GO:0005737">
    <property type="term" value="C:cytoplasm"/>
    <property type="evidence" value="ECO:0007669"/>
    <property type="project" value="TreeGrafter"/>
</dbReference>
<dbReference type="GO" id="GO:0004418">
    <property type="term" value="F:hydroxymethylbilane synthase activity"/>
    <property type="evidence" value="ECO:0007669"/>
    <property type="project" value="UniProtKB-UniRule"/>
</dbReference>
<dbReference type="GO" id="GO:0006782">
    <property type="term" value="P:protoporphyrinogen IX biosynthetic process"/>
    <property type="evidence" value="ECO:0007669"/>
    <property type="project" value="UniProtKB-UniRule"/>
</dbReference>
<dbReference type="CDD" id="cd13644">
    <property type="entry name" value="PBP2_HemC_archaea"/>
    <property type="match status" value="1"/>
</dbReference>
<dbReference type="Gene3D" id="3.40.190.10">
    <property type="entry name" value="Periplasmic binding protein-like II"/>
    <property type="match status" value="2"/>
</dbReference>
<dbReference type="Gene3D" id="3.30.160.40">
    <property type="entry name" value="Porphobilinogen deaminase, C-terminal domain"/>
    <property type="match status" value="1"/>
</dbReference>
<dbReference type="HAMAP" id="MF_00260">
    <property type="entry name" value="Porphobil_deam"/>
    <property type="match status" value="1"/>
</dbReference>
<dbReference type="InterPro" id="IPR000860">
    <property type="entry name" value="HemC"/>
</dbReference>
<dbReference type="InterPro" id="IPR022419">
    <property type="entry name" value="Porphobilin_deaminase_cofac_BS"/>
</dbReference>
<dbReference type="InterPro" id="IPR022417">
    <property type="entry name" value="Porphobilin_deaminase_N"/>
</dbReference>
<dbReference type="InterPro" id="IPR022418">
    <property type="entry name" value="Porphobilinogen_deaminase_C"/>
</dbReference>
<dbReference type="InterPro" id="IPR036803">
    <property type="entry name" value="Porphobilinogen_deaminase_C_sf"/>
</dbReference>
<dbReference type="NCBIfam" id="TIGR00212">
    <property type="entry name" value="hemC"/>
    <property type="match status" value="1"/>
</dbReference>
<dbReference type="PANTHER" id="PTHR11557">
    <property type="entry name" value="PORPHOBILINOGEN DEAMINASE"/>
    <property type="match status" value="1"/>
</dbReference>
<dbReference type="PANTHER" id="PTHR11557:SF0">
    <property type="entry name" value="PORPHOBILINOGEN DEAMINASE"/>
    <property type="match status" value="1"/>
</dbReference>
<dbReference type="Pfam" id="PF01379">
    <property type="entry name" value="Porphobil_deam"/>
    <property type="match status" value="1"/>
</dbReference>
<dbReference type="Pfam" id="PF03900">
    <property type="entry name" value="Porphobil_deamC"/>
    <property type="match status" value="1"/>
</dbReference>
<dbReference type="PIRSF" id="PIRSF001438">
    <property type="entry name" value="4pyrrol_synth_OHMeBilane_synth"/>
    <property type="match status" value="1"/>
</dbReference>
<dbReference type="PRINTS" id="PR00151">
    <property type="entry name" value="PORPHBDMNASE"/>
</dbReference>
<dbReference type="SUPFAM" id="SSF53850">
    <property type="entry name" value="Periplasmic binding protein-like II"/>
    <property type="match status" value="1"/>
</dbReference>
<dbReference type="SUPFAM" id="SSF54782">
    <property type="entry name" value="Porphobilinogen deaminase (hydroxymethylbilane synthase), C-terminal domain"/>
    <property type="match status" value="1"/>
</dbReference>
<dbReference type="PROSITE" id="PS00533">
    <property type="entry name" value="PORPHOBILINOGEN_DEAM"/>
    <property type="match status" value="1"/>
</dbReference>
<sequence length="293" mass="32925">MKIRIAARGSKLSRIQVDMLGEKLKKIGIEYEIIDIKTKADLFSTDPLSKLGKGVFEKEVNEAVLEGKADIAVHSMKDILSEINPSLEIFAVLERDPPYDILIAEKNLDKLDSNITIGTSSIRRKNFLKYIKPEINTKDIRGNVDTRIRKYLSKEYQGLILAEASLKRLNMTMNYHRLNVYDFTPEANQGIIVALGRKKDEKIKEIFKEINHKDTLDEALAERAVISLVGGGCHSPIGVLFKKEGKEFYGIASYSDGKKKITVSISKPGDPYTIGSELGLLLKKEMKNEDIIP</sequence>
<gene>
    <name evidence="1" type="primary">hemC</name>
    <name type="ordered locus">YG5714_2074</name>
</gene>
<evidence type="ECO:0000255" key="1">
    <source>
        <dbReference type="HAMAP-Rule" id="MF_00260"/>
    </source>
</evidence>
<keyword id="KW-0627">Porphyrin biosynthesis</keyword>
<keyword id="KW-0808">Transferase</keyword>
<name>HEM3_SACI7</name>